<name>ABCG9_DICDI</name>
<evidence type="ECO:0000255" key="1"/>
<evidence type="ECO:0000255" key="2">
    <source>
        <dbReference type="PROSITE-ProRule" id="PRU00434"/>
    </source>
</evidence>
<evidence type="ECO:0000256" key="3">
    <source>
        <dbReference type="SAM" id="MobiDB-lite"/>
    </source>
</evidence>
<evidence type="ECO:0000305" key="4"/>
<feature type="chain" id="PRO_0000391396" description="ABC transporter G family member 9">
    <location>
        <begin position="1"/>
        <end position="1448"/>
    </location>
</feature>
<feature type="transmembrane region" description="Helical" evidence="1">
    <location>
        <begin position="494"/>
        <end position="514"/>
    </location>
</feature>
<feature type="transmembrane region" description="Helical" evidence="1">
    <location>
        <begin position="530"/>
        <end position="550"/>
    </location>
</feature>
<feature type="transmembrane region" description="Helical" evidence="1">
    <location>
        <begin position="579"/>
        <end position="599"/>
    </location>
</feature>
<feature type="transmembrane region" description="Helical" evidence="1">
    <location>
        <begin position="604"/>
        <end position="624"/>
    </location>
</feature>
<feature type="transmembrane region" description="Helical" evidence="1">
    <location>
        <begin position="634"/>
        <end position="654"/>
    </location>
</feature>
<feature type="transmembrane region" description="Helical" evidence="1">
    <location>
        <begin position="663"/>
        <end position="683"/>
    </location>
</feature>
<feature type="transmembrane region" description="Helical" evidence="1">
    <location>
        <begin position="748"/>
        <end position="768"/>
    </location>
</feature>
<feature type="transmembrane region" description="Helical" evidence="1">
    <location>
        <begin position="1157"/>
        <end position="1177"/>
    </location>
</feature>
<feature type="transmembrane region" description="Helical" evidence="1">
    <location>
        <begin position="1191"/>
        <end position="1211"/>
    </location>
</feature>
<feature type="transmembrane region" description="Helical" evidence="1">
    <location>
        <begin position="1233"/>
        <end position="1253"/>
    </location>
</feature>
<feature type="transmembrane region" description="Helical" evidence="1">
    <location>
        <begin position="1272"/>
        <end position="1292"/>
    </location>
</feature>
<feature type="transmembrane region" description="Helical" evidence="1">
    <location>
        <begin position="1299"/>
        <end position="1319"/>
    </location>
</feature>
<feature type="transmembrane region" description="Helical" evidence="1">
    <location>
        <begin position="1422"/>
        <end position="1442"/>
    </location>
</feature>
<feature type="domain" description="ABC transporter 1" evidence="2">
    <location>
        <begin position="136"/>
        <end position="385"/>
    </location>
</feature>
<feature type="domain" description="ABC transmembrane type-2 1">
    <location>
        <begin position="490"/>
        <end position="717"/>
    </location>
</feature>
<feature type="domain" description="ABC transporter 2" evidence="2">
    <location>
        <begin position="822"/>
        <end position="1066"/>
    </location>
</feature>
<feature type="domain" description="ABC transmembrane type-2 2">
    <location>
        <begin position="1157"/>
        <end position="1389"/>
    </location>
</feature>
<feature type="region of interest" description="Disordered" evidence="3">
    <location>
        <begin position="16"/>
        <end position="41"/>
    </location>
</feature>
<feature type="compositionally biased region" description="Polar residues" evidence="3">
    <location>
        <begin position="16"/>
        <end position="28"/>
    </location>
</feature>
<feature type="binding site" evidence="2">
    <location>
        <begin position="858"/>
        <end position="865"/>
    </location>
    <ligand>
        <name>ATP</name>
        <dbReference type="ChEBI" id="CHEBI:30616"/>
    </ligand>
</feature>
<accession>Q8T683</accession>
<accession>Q54BS5</accession>
<dbReference type="EMBL" id="AF482388">
    <property type="protein sequence ID" value="AAL91495.1"/>
    <property type="molecule type" value="Genomic_DNA"/>
</dbReference>
<dbReference type="EMBL" id="AAFI02000211">
    <property type="protein sequence ID" value="EAL60709.1"/>
    <property type="molecule type" value="Genomic_DNA"/>
</dbReference>
<dbReference type="RefSeq" id="XP_629126.1">
    <property type="nucleotide sequence ID" value="XM_629124.1"/>
</dbReference>
<dbReference type="SMR" id="Q8T683"/>
<dbReference type="FunCoup" id="Q8T683">
    <property type="interactions" value="7"/>
</dbReference>
<dbReference type="PaxDb" id="44689-DDB0214893"/>
<dbReference type="EnsemblProtists" id="EAL60709">
    <property type="protein sequence ID" value="EAL60709"/>
    <property type="gene ID" value="DDB_G0293450"/>
</dbReference>
<dbReference type="GeneID" id="8629234"/>
<dbReference type="KEGG" id="ddi:DDB_G0293450"/>
<dbReference type="dictyBase" id="DDB_G0293450">
    <property type="gene designation" value="abcG9"/>
</dbReference>
<dbReference type="VEuPathDB" id="AmoebaDB:DDB_G0293450"/>
<dbReference type="eggNOG" id="KOG0065">
    <property type="taxonomic scope" value="Eukaryota"/>
</dbReference>
<dbReference type="HOGENOM" id="CLU_000604_35_0_1"/>
<dbReference type="InParanoid" id="Q8T683"/>
<dbReference type="OMA" id="WHDVCYE"/>
<dbReference type="PhylomeDB" id="Q8T683"/>
<dbReference type="PRO" id="PR:Q8T683"/>
<dbReference type="Proteomes" id="UP000002195">
    <property type="component" value="Chromosome 6"/>
</dbReference>
<dbReference type="GO" id="GO:0016020">
    <property type="term" value="C:membrane"/>
    <property type="evidence" value="ECO:0007669"/>
    <property type="project" value="UniProtKB-SubCell"/>
</dbReference>
<dbReference type="GO" id="GO:0140359">
    <property type="term" value="F:ABC-type transporter activity"/>
    <property type="evidence" value="ECO:0007669"/>
    <property type="project" value="InterPro"/>
</dbReference>
<dbReference type="GO" id="GO:0005524">
    <property type="term" value="F:ATP binding"/>
    <property type="evidence" value="ECO:0007669"/>
    <property type="project" value="UniProtKB-KW"/>
</dbReference>
<dbReference type="GO" id="GO:0016887">
    <property type="term" value="F:ATP hydrolysis activity"/>
    <property type="evidence" value="ECO:0007669"/>
    <property type="project" value="InterPro"/>
</dbReference>
<dbReference type="GO" id="GO:0042626">
    <property type="term" value="F:ATPase-coupled transmembrane transporter activity"/>
    <property type="evidence" value="ECO:0000317"/>
    <property type="project" value="dictyBase"/>
</dbReference>
<dbReference type="GO" id="GO:0031152">
    <property type="term" value="P:aggregation involved in sorocarp development"/>
    <property type="evidence" value="ECO:0000318"/>
    <property type="project" value="GO_Central"/>
</dbReference>
<dbReference type="GO" id="GO:0031288">
    <property type="term" value="P:sorocarp morphogenesis"/>
    <property type="evidence" value="ECO:0000318"/>
    <property type="project" value="GO_Central"/>
</dbReference>
<dbReference type="CDD" id="cd03233">
    <property type="entry name" value="ABCG_PDR_domain1"/>
    <property type="match status" value="1"/>
</dbReference>
<dbReference type="CDD" id="cd03232">
    <property type="entry name" value="ABCG_PDR_domain2"/>
    <property type="match status" value="1"/>
</dbReference>
<dbReference type="FunFam" id="3.40.50.300:FF:000054">
    <property type="entry name" value="ABC multidrug transporter atrF"/>
    <property type="match status" value="1"/>
</dbReference>
<dbReference type="FunFam" id="3.40.50.300:FF:002175">
    <property type="entry name" value="ABC transporter G family member 9"/>
    <property type="match status" value="1"/>
</dbReference>
<dbReference type="Gene3D" id="3.40.50.300">
    <property type="entry name" value="P-loop containing nucleotide triphosphate hydrolases"/>
    <property type="match status" value="2"/>
</dbReference>
<dbReference type="InterPro" id="IPR003593">
    <property type="entry name" value="AAA+_ATPase"/>
</dbReference>
<dbReference type="InterPro" id="IPR013525">
    <property type="entry name" value="ABC2_TM"/>
</dbReference>
<dbReference type="InterPro" id="IPR029481">
    <property type="entry name" value="ABC_trans_N"/>
</dbReference>
<dbReference type="InterPro" id="IPR003439">
    <property type="entry name" value="ABC_transporter-like_ATP-bd"/>
</dbReference>
<dbReference type="InterPro" id="IPR043926">
    <property type="entry name" value="ABCG_dom"/>
</dbReference>
<dbReference type="InterPro" id="IPR034001">
    <property type="entry name" value="ABCG_PDR_1"/>
</dbReference>
<dbReference type="InterPro" id="IPR034003">
    <property type="entry name" value="ABCG_PDR_2"/>
</dbReference>
<dbReference type="InterPro" id="IPR027417">
    <property type="entry name" value="P-loop_NTPase"/>
</dbReference>
<dbReference type="InterPro" id="IPR010929">
    <property type="entry name" value="PDR_CDR_ABC"/>
</dbReference>
<dbReference type="PANTHER" id="PTHR19241">
    <property type="entry name" value="ATP-BINDING CASSETTE TRANSPORTER"/>
    <property type="match status" value="1"/>
</dbReference>
<dbReference type="Pfam" id="PF01061">
    <property type="entry name" value="ABC2_membrane"/>
    <property type="match status" value="2"/>
</dbReference>
<dbReference type="Pfam" id="PF19055">
    <property type="entry name" value="ABC2_membrane_7"/>
    <property type="match status" value="1"/>
</dbReference>
<dbReference type="Pfam" id="PF00005">
    <property type="entry name" value="ABC_tran"/>
    <property type="match status" value="2"/>
</dbReference>
<dbReference type="Pfam" id="PF14510">
    <property type="entry name" value="ABC_trans_N"/>
    <property type="match status" value="1"/>
</dbReference>
<dbReference type="Pfam" id="PF06422">
    <property type="entry name" value="PDR_CDR"/>
    <property type="match status" value="1"/>
</dbReference>
<dbReference type="SMART" id="SM00382">
    <property type="entry name" value="AAA"/>
    <property type="match status" value="2"/>
</dbReference>
<dbReference type="SUPFAM" id="SSF52540">
    <property type="entry name" value="P-loop containing nucleoside triphosphate hydrolases"/>
    <property type="match status" value="2"/>
</dbReference>
<dbReference type="PROSITE" id="PS50893">
    <property type="entry name" value="ABC_TRANSPORTER_2"/>
    <property type="match status" value="2"/>
</dbReference>
<proteinExistence type="inferred from homology"/>
<comment type="subcellular location">
    <subcellularLocation>
        <location evidence="4">Membrane</location>
        <topology evidence="4">Multi-pass membrane protein</topology>
    </subcellularLocation>
</comment>
<comment type="similarity">
    <text evidence="4">Belongs to the ABC transporter superfamily. ABCG family. PDR (TC 3.A.1.205) subfamily.</text>
</comment>
<protein>
    <recommendedName>
        <fullName>ABC transporter G family member 9</fullName>
    </recommendedName>
    <alternativeName>
        <fullName>ABC transporter ABCG.9</fullName>
    </alternativeName>
</protein>
<reference key="1">
    <citation type="journal article" date="2002" name="Eukaryot. Cell">
        <title>Evolutionary analyses of ABC transporters of Dictyostelium discoideum.</title>
        <authorList>
            <person name="Anjard C."/>
            <person name="Loomis W.F."/>
        </authorList>
    </citation>
    <scope>NUCLEOTIDE SEQUENCE [GENOMIC DNA]</scope>
    <scope>NOMENCLATURE</scope>
    <source>
        <strain>AX4</strain>
    </source>
</reference>
<reference key="2">
    <citation type="journal article" date="2005" name="Nature">
        <title>The genome of the social amoeba Dictyostelium discoideum.</title>
        <authorList>
            <person name="Eichinger L."/>
            <person name="Pachebat J.A."/>
            <person name="Gloeckner G."/>
            <person name="Rajandream M.A."/>
            <person name="Sucgang R."/>
            <person name="Berriman M."/>
            <person name="Song J."/>
            <person name="Olsen R."/>
            <person name="Szafranski K."/>
            <person name="Xu Q."/>
            <person name="Tunggal B."/>
            <person name="Kummerfeld S."/>
            <person name="Madera M."/>
            <person name="Konfortov B.A."/>
            <person name="Rivero F."/>
            <person name="Bankier A.T."/>
            <person name="Lehmann R."/>
            <person name="Hamlin N."/>
            <person name="Davies R."/>
            <person name="Gaudet P."/>
            <person name="Fey P."/>
            <person name="Pilcher K."/>
            <person name="Chen G."/>
            <person name="Saunders D."/>
            <person name="Sodergren E.J."/>
            <person name="Davis P."/>
            <person name="Kerhornou A."/>
            <person name="Nie X."/>
            <person name="Hall N."/>
            <person name="Anjard C."/>
            <person name="Hemphill L."/>
            <person name="Bason N."/>
            <person name="Farbrother P."/>
            <person name="Desany B."/>
            <person name="Just E."/>
            <person name="Morio T."/>
            <person name="Rost R."/>
            <person name="Churcher C.M."/>
            <person name="Cooper J."/>
            <person name="Haydock S."/>
            <person name="van Driessche N."/>
            <person name="Cronin A."/>
            <person name="Goodhead I."/>
            <person name="Muzny D.M."/>
            <person name="Mourier T."/>
            <person name="Pain A."/>
            <person name="Lu M."/>
            <person name="Harper D."/>
            <person name="Lindsay R."/>
            <person name="Hauser H."/>
            <person name="James K.D."/>
            <person name="Quiles M."/>
            <person name="Madan Babu M."/>
            <person name="Saito T."/>
            <person name="Buchrieser C."/>
            <person name="Wardroper A."/>
            <person name="Felder M."/>
            <person name="Thangavelu M."/>
            <person name="Johnson D."/>
            <person name="Knights A."/>
            <person name="Loulseged H."/>
            <person name="Mungall K.L."/>
            <person name="Oliver K."/>
            <person name="Price C."/>
            <person name="Quail M.A."/>
            <person name="Urushihara H."/>
            <person name="Hernandez J."/>
            <person name="Rabbinowitsch E."/>
            <person name="Steffen D."/>
            <person name="Sanders M."/>
            <person name="Ma J."/>
            <person name="Kohara Y."/>
            <person name="Sharp S."/>
            <person name="Simmonds M.N."/>
            <person name="Spiegler S."/>
            <person name="Tivey A."/>
            <person name="Sugano S."/>
            <person name="White B."/>
            <person name="Walker D."/>
            <person name="Woodward J.R."/>
            <person name="Winckler T."/>
            <person name="Tanaka Y."/>
            <person name="Shaulsky G."/>
            <person name="Schleicher M."/>
            <person name="Weinstock G.M."/>
            <person name="Rosenthal A."/>
            <person name="Cox E.C."/>
            <person name="Chisholm R.L."/>
            <person name="Gibbs R.A."/>
            <person name="Loomis W.F."/>
            <person name="Platzer M."/>
            <person name="Kay R.R."/>
            <person name="Williams J.G."/>
            <person name="Dear P.H."/>
            <person name="Noegel A.A."/>
            <person name="Barrell B.G."/>
            <person name="Kuspa A."/>
        </authorList>
    </citation>
    <scope>NUCLEOTIDE SEQUENCE [LARGE SCALE GENOMIC DNA]</scope>
    <source>
        <strain>AX4</strain>
    </source>
</reference>
<organism>
    <name type="scientific">Dictyostelium discoideum</name>
    <name type="common">Social amoeba</name>
    <dbReference type="NCBI Taxonomy" id="44689"/>
    <lineage>
        <taxon>Eukaryota</taxon>
        <taxon>Amoebozoa</taxon>
        <taxon>Evosea</taxon>
        <taxon>Eumycetozoa</taxon>
        <taxon>Dictyostelia</taxon>
        <taxon>Dictyosteliales</taxon>
        <taxon>Dictyosteliaceae</taxon>
        <taxon>Dictyostelium</taxon>
    </lineage>
</organism>
<keyword id="KW-0067">ATP-binding</keyword>
<keyword id="KW-0472">Membrane</keyword>
<keyword id="KW-0547">Nucleotide-binding</keyword>
<keyword id="KW-1185">Reference proteome</keyword>
<keyword id="KW-0677">Repeat</keyword>
<keyword id="KW-0812">Transmembrane</keyword>
<keyword id="KW-1133">Transmembrane helix</keyword>
<keyword id="KW-0813">Transport</keyword>
<sequence>MDNNVEYELKEVSIQEGGSNLNINTPSGMSDGDFNSGANSPDIVKSENDFDKLAESLEKESKQYFAAQDNENNAGESEEDFKLRRYFENSQRMALSNGSKPKKMSICIRNLTVVGRGADLSVIADLLTPFNWFISLFKPSTWKIEKTSTFNILNNVTCFNRDGQMLLVLGRPGAGCSTLLRLISNQRGSYISVDGDIKYGGIPAKEWERYKGEAIYTPEEDSHHPTLTVRETLDFALKCKTIHNRLPDEKKVTFREKISSLLLSMFGIVHQADTIVGNEYIRGLSGGERKRLTITEAMVSSASITCWDCSTRGLDAASALDYAKSIRIMSDTLHKTSIASFYQASDSIYNLFDNVLVLEKGRCIYFGPVGQAKQYFLDLGFDCEPRKSVPDFLTGVTNPQERIIRKGFEGRVPETSADFEQAWKASELCREMERQQTEHEKKIEVEQPHLDFIEEVRANKSKTNTKTSVYTTSFPTQVRALIVRHSQIIWGDKFSLVSRYLSVIIQSFVYGSVFYNMQTNLSGLFTRGGAIFAAILFNAFLSEGELFATFYGRRILQKQQSYAMYRPSAFHIAQVVTDIPLTTVQVFLFSIVVYFMFGLQYEAGKFFIFCFTLIGATLATTNMFRAFGNLSPSLYVSQNVMTGILIFMISYCGYSIPKNKMHPWFGWFFWANPFTYAFKALMANEFMDLNFSCETEAIPYGTDPTTGAPYDNSVRVCASAGSRPNTLEVKGSDYLMDALTFKSDDRTLNIFITYLWWVLFIIINMVAVEYLEWTSGGFTTKTYKKGKAPKLNDAEEERKQNEIVAKATSEMKDTLKMRGGVFTWENIKYTVPVGKTQKLLLDDVEGWIKPGQMTALMGSSGAGKTTLLDVLAKRKTLGTVQGKTFLNGKALEIDFERITGYVEQMDVHNPGLTVREALRFSAKLRQEPSVSLEEKYDYVEHVLEMMEMKHLGDALVGTLETGVGISVEERKRLTIGVELVAKPHILFLDEPTSGLDAQSSYNIVKFIRKLADAGMPLVCTIHQPSSVLFEHFDRILLLAKGGKTVYFGDIGERSKTLTSYFERQGVRPCTEFENPAEYILEATGAGVHGKTEINWPEVWKQSPELQEVRRELSSLEASGSSSSSNENGVPREFATSIWYQTWEVYKRMNVIYFRDPFYAYGSILQAVMTGIIVGFTFWDLKDSSSDMNQRIFFIFQALLLGILLIFVVMVQFLVQKEYFKRDYASKFYSWFPFAISIVLVEIPYTIVCGSVFFFCSFWTAGLFMEGQNGANFYFWIIFIIYLFFCVSFGGAIAAVCNHMFLAMTLVPLLIVFLFLFCGVMVPPSQIPTFWKGWVYHLNPCRYFMEGIITNVLEHQKVNCSYEDLTKFNNPTTLTCEEYFVPATGYVTNTTSDNSECGYCIFNSGEQYYKTLEWDASNKGRSIAILIAFWMFNIFLVVSFVYLTRKPSR</sequence>
<gene>
    <name type="primary">abcG9</name>
    <name type="ORF">DDB_G0293450</name>
</gene>